<reference key="1">
    <citation type="journal article" date="2008" name="PLoS ONE">
        <title>Survival in nuclear waste, extreme resistance, and potential applications gleaned from the genome sequence of Kineococcus radiotolerans SRS30216.</title>
        <authorList>
            <person name="Bagwell C.E."/>
            <person name="Bhat S."/>
            <person name="Hawkins G.M."/>
            <person name="Smith B.W."/>
            <person name="Biswas T."/>
            <person name="Hoover T.R."/>
            <person name="Saunders E."/>
            <person name="Han C.S."/>
            <person name="Tsodikov O.V."/>
            <person name="Shimkets L.J."/>
        </authorList>
    </citation>
    <scope>NUCLEOTIDE SEQUENCE [LARGE SCALE GENOMIC DNA]</scope>
    <source>
        <strain>ATCC BAA-149 / DSM 14245 / SRS30216</strain>
    </source>
</reference>
<sequence>MSVAVRVIPCLDVDAGRVVKGVNFADLRDAGDPVELARRYDAEGADELTFLDVTASSGSRETTYDVVRRTAEQVFIPLTVGGGVRSVADVEKLLRAGADKVGVNTAAIARPELIGEIAHRFGAQVLVLSVDARRTLPGEPTTASGFEVTTHGGRRGTGLDAVEWAARAAELGAGEILLNSMDADGTKAGFDLEMLTEVRARVTVPLVASGGAGAVGHFPPAVAAGADAVLAASVFHFGQLTVGEVKDALRAAGSAVR</sequence>
<protein>
    <recommendedName>
        <fullName evidence="1">Imidazole glycerol phosphate synthase subunit HisF</fullName>
        <ecNumber evidence="1">4.3.2.10</ecNumber>
    </recommendedName>
    <alternativeName>
        <fullName evidence="1">IGP synthase cyclase subunit</fullName>
    </alternativeName>
    <alternativeName>
        <fullName evidence="1">IGP synthase subunit HisF</fullName>
    </alternativeName>
    <alternativeName>
        <fullName evidence="1">ImGP synthase subunit HisF</fullName>
        <shortName evidence="1">IGPS subunit HisF</shortName>
    </alternativeName>
</protein>
<proteinExistence type="inferred from homology"/>
<dbReference type="EC" id="4.3.2.10" evidence="1"/>
<dbReference type="EMBL" id="CP000750">
    <property type="protein sequence ID" value="ABS04435.1"/>
    <property type="molecule type" value="Genomic_DNA"/>
</dbReference>
<dbReference type="RefSeq" id="WP_012087318.1">
    <property type="nucleotide sequence ID" value="NC_009664.2"/>
</dbReference>
<dbReference type="SMR" id="A6WC96"/>
<dbReference type="STRING" id="266940.Krad_2971"/>
<dbReference type="KEGG" id="kra:Krad_2971"/>
<dbReference type="eggNOG" id="COG0107">
    <property type="taxonomic scope" value="Bacteria"/>
</dbReference>
<dbReference type="HOGENOM" id="CLU_048577_4_0_11"/>
<dbReference type="OrthoDB" id="9781903at2"/>
<dbReference type="UniPathway" id="UPA00031">
    <property type="reaction ID" value="UER00010"/>
</dbReference>
<dbReference type="Proteomes" id="UP000001116">
    <property type="component" value="Chromosome"/>
</dbReference>
<dbReference type="GO" id="GO:0005737">
    <property type="term" value="C:cytoplasm"/>
    <property type="evidence" value="ECO:0007669"/>
    <property type="project" value="UniProtKB-SubCell"/>
</dbReference>
<dbReference type="GO" id="GO:0000107">
    <property type="term" value="F:imidazoleglycerol-phosphate synthase activity"/>
    <property type="evidence" value="ECO:0007669"/>
    <property type="project" value="UniProtKB-UniRule"/>
</dbReference>
<dbReference type="GO" id="GO:0016829">
    <property type="term" value="F:lyase activity"/>
    <property type="evidence" value="ECO:0007669"/>
    <property type="project" value="UniProtKB-KW"/>
</dbReference>
<dbReference type="GO" id="GO:0000105">
    <property type="term" value="P:L-histidine biosynthetic process"/>
    <property type="evidence" value="ECO:0007669"/>
    <property type="project" value="UniProtKB-UniRule"/>
</dbReference>
<dbReference type="CDD" id="cd04731">
    <property type="entry name" value="HisF"/>
    <property type="match status" value="1"/>
</dbReference>
<dbReference type="FunFam" id="3.20.20.70:FF:000006">
    <property type="entry name" value="Imidazole glycerol phosphate synthase subunit HisF"/>
    <property type="match status" value="1"/>
</dbReference>
<dbReference type="Gene3D" id="3.20.20.70">
    <property type="entry name" value="Aldolase class I"/>
    <property type="match status" value="1"/>
</dbReference>
<dbReference type="HAMAP" id="MF_01013">
    <property type="entry name" value="HisF"/>
    <property type="match status" value="1"/>
</dbReference>
<dbReference type="InterPro" id="IPR013785">
    <property type="entry name" value="Aldolase_TIM"/>
</dbReference>
<dbReference type="InterPro" id="IPR006062">
    <property type="entry name" value="His_biosynth"/>
</dbReference>
<dbReference type="InterPro" id="IPR004651">
    <property type="entry name" value="HisF"/>
</dbReference>
<dbReference type="InterPro" id="IPR050064">
    <property type="entry name" value="IGPS_HisA/HisF"/>
</dbReference>
<dbReference type="InterPro" id="IPR011060">
    <property type="entry name" value="RibuloseP-bd_barrel"/>
</dbReference>
<dbReference type="NCBIfam" id="TIGR00735">
    <property type="entry name" value="hisF"/>
    <property type="match status" value="1"/>
</dbReference>
<dbReference type="PANTHER" id="PTHR21235:SF2">
    <property type="entry name" value="IMIDAZOLE GLYCEROL PHOSPHATE SYNTHASE HISHF"/>
    <property type="match status" value="1"/>
</dbReference>
<dbReference type="PANTHER" id="PTHR21235">
    <property type="entry name" value="IMIDAZOLE GLYCEROL PHOSPHATE SYNTHASE SUBUNIT HISF/H IGP SYNTHASE SUBUNIT HISF/H"/>
    <property type="match status" value="1"/>
</dbReference>
<dbReference type="Pfam" id="PF00977">
    <property type="entry name" value="His_biosynth"/>
    <property type="match status" value="1"/>
</dbReference>
<dbReference type="SUPFAM" id="SSF51366">
    <property type="entry name" value="Ribulose-phoshate binding barrel"/>
    <property type="match status" value="1"/>
</dbReference>
<gene>
    <name evidence="1" type="primary">hisF</name>
    <name type="ordered locus">Krad_2971</name>
</gene>
<keyword id="KW-0028">Amino-acid biosynthesis</keyword>
<keyword id="KW-0963">Cytoplasm</keyword>
<keyword id="KW-0368">Histidine biosynthesis</keyword>
<keyword id="KW-0456">Lyase</keyword>
<keyword id="KW-1185">Reference proteome</keyword>
<evidence type="ECO:0000255" key="1">
    <source>
        <dbReference type="HAMAP-Rule" id="MF_01013"/>
    </source>
</evidence>
<feature type="chain" id="PRO_1000084063" description="Imidazole glycerol phosphate synthase subunit HisF">
    <location>
        <begin position="1"/>
        <end position="257"/>
    </location>
</feature>
<feature type="active site" evidence="1">
    <location>
        <position position="12"/>
    </location>
</feature>
<feature type="active site" evidence="1">
    <location>
        <position position="131"/>
    </location>
</feature>
<organism>
    <name type="scientific">Kineococcus radiotolerans (strain ATCC BAA-149 / DSM 14245 / SRS30216)</name>
    <dbReference type="NCBI Taxonomy" id="266940"/>
    <lineage>
        <taxon>Bacteria</taxon>
        <taxon>Bacillati</taxon>
        <taxon>Actinomycetota</taxon>
        <taxon>Actinomycetes</taxon>
        <taxon>Kineosporiales</taxon>
        <taxon>Kineosporiaceae</taxon>
        <taxon>Kineococcus</taxon>
    </lineage>
</organism>
<accession>A6WC96</accession>
<name>HIS6_KINRD</name>
<comment type="function">
    <text evidence="1">IGPS catalyzes the conversion of PRFAR and glutamine to IGP, AICAR and glutamate. The HisF subunit catalyzes the cyclization activity that produces IGP and AICAR from PRFAR using the ammonia provided by the HisH subunit.</text>
</comment>
<comment type="catalytic activity">
    <reaction evidence="1">
        <text>5-[(5-phospho-1-deoxy-D-ribulos-1-ylimino)methylamino]-1-(5-phospho-beta-D-ribosyl)imidazole-4-carboxamide + L-glutamine = D-erythro-1-(imidazol-4-yl)glycerol 3-phosphate + 5-amino-1-(5-phospho-beta-D-ribosyl)imidazole-4-carboxamide + L-glutamate + H(+)</text>
        <dbReference type="Rhea" id="RHEA:24793"/>
        <dbReference type="ChEBI" id="CHEBI:15378"/>
        <dbReference type="ChEBI" id="CHEBI:29985"/>
        <dbReference type="ChEBI" id="CHEBI:58278"/>
        <dbReference type="ChEBI" id="CHEBI:58359"/>
        <dbReference type="ChEBI" id="CHEBI:58475"/>
        <dbReference type="ChEBI" id="CHEBI:58525"/>
        <dbReference type="EC" id="4.3.2.10"/>
    </reaction>
</comment>
<comment type="pathway">
    <text evidence="1">Amino-acid biosynthesis; L-histidine biosynthesis; L-histidine from 5-phospho-alpha-D-ribose 1-diphosphate: step 5/9.</text>
</comment>
<comment type="subunit">
    <text evidence="1">Heterodimer of HisH and HisF.</text>
</comment>
<comment type="subcellular location">
    <subcellularLocation>
        <location evidence="1">Cytoplasm</location>
    </subcellularLocation>
</comment>
<comment type="similarity">
    <text evidence="1">Belongs to the HisA/HisF family.</text>
</comment>